<gene>
    <name evidence="1" type="primary">upp</name>
    <name type="ordered locus">SAUSA300_2066</name>
</gene>
<organism>
    <name type="scientific">Staphylococcus aureus (strain USA300)</name>
    <dbReference type="NCBI Taxonomy" id="367830"/>
    <lineage>
        <taxon>Bacteria</taxon>
        <taxon>Bacillati</taxon>
        <taxon>Bacillota</taxon>
        <taxon>Bacilli</taxon>
        <taxon>Bacillales</taxon>
        <taxon>Staphylococcaceae</taxon>
        <taxon>Staphylococcus</taxon>
    </lineage>
</organism>
<reference key="1">
    <citation type="journal article" date="2006" name="Lancet">
        <title>Complete genome sequence of USA300, an epidemic clone of community-acquired meticillin-resistant Staphylococcus aureus.</title>
        <authorList>
            <person name="Diep B.A."/>
            <person name="Gill S.R."/>
            <person name="Chang R.F."/>
            <person name="Phan T.H."/>
            <person name="Chen J.H."/>
            <person name="Davidson M.G."/>
            <person name="Lin F."/>
            <person name="Lin J."/>
            <person name="Carleton H.A."/>
            <person name="Mongodin E.F."/>
            <person name="Sensabaugh G.F."/>
            <person name="Perdreau-Remington F."/>
        </authorList>
    </citation>
    <scope>NUCLEOTIDE SEQUENCE [LARGE SCALE GENOMIC DNA]</scope>
    <source>
        <strain>USA300</strain>
    </source>
</reference>
<evidence type="ECO:0000255" key="1">
    <source>
        <dbReference type="HAMAP-Rule" id="MF_01218"/>
    </source>
</evidence>
<feature type="chain" id="PRO_1000053791" description="Uracil phosphoribosyltransferase">
    <location>
        <begin position="1"/>
        <end position="209"/>
    </location>
</feature>
<feature type="binding site" evidence="1">
    <location>
        <position position="79"/>
    </location>
    <ligand>
        <name>5-phospho-alpha-D-ribose 1-diphosphate</name>
        <dbReference type="ChEBI" id="CHEBI:58017"/>
    </ligand>
</feature>
<feature type="binding site" evidence="1">
    <location>
        <position position="104"/>
    </location>
    <ligand>
        <name>5-phospho-alpha-D-ribose 1-diphosphate</name>
        <dbReference type="ChEBI" id="CHEBI:58017"/>
    </ligand>
</feature>
<feature type="binding site" evidence="1">
    <location>
        <begin position="131"/>
        <end position="139"/>
    </location>
    <ligand>
        <name>5-phospho-alpha-D-ribose 1-diphosphate</name>
        <dbReference type="ChEBI" id="CHEBI:58017"/>
    </ligand>
</feature>
<feature type="binding site" evidence="1">
    <location>
        <position position="194"/>
    </location>
    <ligand>
        <name>uracil</name>
        <dbReference type="ChEBI" id="CHEBI:17568"/>
    </ligand>
</feature>
<feature type="binding site" evidence="1">
    <location>
        <begin position="199"/>
        <end position="201"/>
    </location>
    <ligand>
        <name>uracil</name>
        <dbReference type="ChEBI" id="CHEBI:17568"/>
    </ligand>
</feature>
<feature type="binding site" evidence="1">
    <location>
        <position position="200"/>
    </location>
    <ligand>
        <name>5-phospho-alpha-D-ribose 1-diphosphate</name>
        <dbReference type="ChEBI" id="CHEBI:58017"/>
    </ligand>
</feature>
<name>UPP_STAA3</name>
<accession>Q2FF16</accession>
<dbReference type="EC" id="2.4.2.9" evidence="1"/>
<dbReference type="EMBL" id="CP000255">
    <property type="protein sequence ID" value="ABD21547.1"/>
    <property type="molecule type" value="Genomic_DNA"/>
</dbReference>
<dbReference type="RefSeq" id="WP_000048712.1">
    <property type="nucleotide sequence ID" value="NZ_CP027476.1"/>
</dbReference>
<dbReference type="SMR" id="Q2FF16"/>
<dbReference type="KEGG" id="saa:SAUSA300_2066"/>
<dbReference type="HOGENOM" id="CLU_067096_2_2_9"/>
<dbReference type="OMA" id="KHKIGLM"/>
<dbReference type="UniPathway" id="UPA00574">
    <property type="reaction ID" value="UER00636"/>
</dbReference>
<dbReference type="Proteomes" id="UP000001939">
    <property type="component" value="Chromosome"/>
</dbReference>
<dbReference type="GO" id="GO:0005525">
    <property type="term" value="F:GTP binding"/>
    <property type="evidence" value="ECO:0007669"/>
    <property type="project" value="UniProtKB-KW"/>
</dbReference>
<dbReference type="GO" id="GO:0000287">
    <property type="term" value="F:magnesium ion binding"/>
    <property type="evidence" value="ECO:0007669"/>
    <property type="project" value="UniProtKB-UniRule"/>
</dbReference>
<dbReference type="GO" id="GO:0004845">
    <property type="term" value="F:uracil phosphoribosyltransferase activity"/>
    <property type="evidence" value="ECO:0007669"/>
    <property type="project" value="UniProtKB-UniRule"/>
</dbReference>
<dbReference type="GO" id="GO:0044206">
    <property type="term" value="P:UMP salvage"/>
    <property type="evidence" value="ECO:0007669"/>
    <property type="project" value="UniProtKB-UniRule"/>
</dbReference>
<dbReference type="GO" id="GO:0006223">
    <property type="term" value="P:uracil salvage"/>
    <property type="evidence" value="ECO:0007669"/>
    <property type="project" value="InterPro"/>
</dbReference>
<dbReference type="CDD" id="cd06223">
    <property type="entry name" value="PRTases_typeI"/>
    <property type="match status" value="1"/>
</dbReference>
<dbReference type="FunFam" id="3.40.50.2020:FF:000003">
    <property type="entry name" value="Uracil phosphoribosyltransferase"/>
    <property type="match status" value="1"/>
</dbReference>
<dbReference type="Gene3D" id="3.40.50.2020">
    <property type="match status" value="1"/>
</dbReference>
<dbReference type="HAMAP" id="MF_01218_B">
    <property type="entry name" value="Upp_B"/>
    <property type="match status" value="1"/>
</dbReference>
<dbReference type="InterPro" id="IPR000836">
    <property type="entry name" value="PRibTrfase_dom"/>
</dbReference>
<dbReference type="InterPro" id="IPR029057">
    <property type="entry name" value="PRTase-like"/>
</dbReference>
<dbReference type="InterPro" id="IPR034332">
    <property type="entry name" value="Upp_B"/>
</dbReference>
<dbReference type="InterPro" id="IPR050054">
    <property type="entry name" value="UPRTase/APRTase"/>
</dbReference>
<dbReference type="InterPro" id="IPR005765">
    <property type="entry name" value="Ura_phspho_trans"/>
</dbReference>
<dbReference type="NCBIfam" id="NF001097">
    <property type="entry name" value="PRK00129.1"/>
    <property type="match status" value="1"/>
</dbReference>
<dbReference type="NCBIfam" id="TIGR01091">
    <property type="entry name" value="upp"/>
    <property type="match status" value="1"/>
</dbReference>
<dbReference type="PANTHER" id="PTHR32315">
    <property type="entry name" value="ADENINE PHOSPHORIBOSYLTRANSFERASE"/>
    <property type="match status" value="1"/>
</dbReference>
<dbReference type="PANTHER" id="PTHR32315:SF4">
    <property type="entry name" value="URACIL PHOSPHORIBOSYLTRANSFERASE, CHLOROPLASTIC"/>
    <property type="match status" value="1"/>
</dbReference>
<dbReference type="Pfam" id="PF14681">
    <property type="entry name" value="UPRTase"/>
    <property type="match status" value="1"/>
</dbReference>
<dbReference type="SUPFAM" id="SSF53271">
    <property type="entry name" value="PRTase-like"/>
    <property type="match status" value="1"/>
</dbReference>
<keyword id="KW-0021">Allosteric enzyme</keyword>
<keyword id="KW-0328">Glycosyltransferase</keyword>
<keyword id="KW-0342">GTP-binding</keyword>
<keyword id="KW-0460">Magnesium</keyword>
<keyword id="KW-0547">Nucleotide-binding</keyword>
<keyword id="KW-0808">Transferase</keyword>
<proteinExistence type="inferred from homology"/>
<protein>
    <recommendedName>
        <fullName evidence="1">Uracil phosphoribosyltransferase</fullName>
        <ecNumber evidence="1">2.4.2.9</ecNumber>
    </recommendedName>
    <alternativeName>
        <fullName evidence="1">UMP pyrophosphorylase</fullName>
    </alternativeName>
    <alternativeName>
        <fullName evidence="1">UPRTase</fullName>
    </alternativeName>
</protein>
<sequence length="209" mass="23050">MSKVHVFDHPLIQHKLSYIRDVNTGTKEFRELVDEVGMLMAYEVTRDLELQDVDIETPVTKMTAKRLAGKKLAIVPILRAGLGMTDGILSLVPAARVGHIGLYRDPETLKAVEYFAKLPQDITERQIIVVDPMLATGASAIEAITSLKKRGAKNIRFMCLIAAPEGVEKMHEAHPDVDIYIAALDEKLNDKAYITPGLGDAGDRLFGTK</sequence>
<comment type="function">
    <text evidence="1">Catalyzes the conversion of uracil and 5-phospho-alpha-D-ribose 1-diphosphate (PRPP) to UMP and diphosphate.</text>
</comment>
<comment type="catalytic activity">
    <reaction evidence="1">
        <text>UMP + diphosphate = 5-phospho-alpha-D-ribose 1-diphosphate + uracil</text>
        <dbReference type="Rhea" id="RHEA:13017"/>
        <dbReference type="ChEBI" id="CHEBI:17568"/>
        <dbReference type="ChEBI" id="CHEBI:33019"/>
        <dbReference type="ChEBI" id="CHEBI:57865"/>
        <dbReference type="ChEBI" id="CHEBI:58017"/>
        <dbReference type="EC" id="2.4.2.9"/>
    </reaction>
</comment>
<comment type="cofactor">
    <cofactor evidence="1">
        <name>Mg(2+)</name>
        <dbReference type="ChEBI" id="CHEBI:18420"/>
    </cofactor>
    <text evidence="1">Binds 1 Mg(2+) ion per subunit. The magnesium is bound as Mg-PRPP.</text>
</comment>
<comment type="activity regulation">
    <text evidence="1">Allosterically activated by GTP.</text>
</comment>
<comment type="pathway">
    <text evidence="1">Pyrimidine metabolism; UMP biosynthesis via salvage pathway; UMP from uracil: step 1/1.</text>
</comment>
<comment type="similarity">
    <text evidence="1">Belongs to the UPRTase family.</text>
</comment>